<gene>
    <name evidence="1" type="primary">fabH</name>
    <name type="ordered locus">Sala_1418</name>
</gene>
<comment type="function">
    <text evidence="1">Catalyzes the condensation reaction of fatty acid synthesis by the addition to an acyl acceptor of two carbons from malonyl-ACP. Catalyzes the first condensation reaction which initiates fatty acid synthesis and may therefore play a role in governing the total rate of fatty acid production. Possesses both acetoacetyl-ACP synthase and acetyl transacylase activities. Its substrate specificity determines the biosynthesis of branched-chain and/or straight-chain of fatty acids.</text>
</comment>
<comment type="catalytic activity">
    <reaction evidence="1">
        <text>malonyl-[ACP] + acetyl-CoA + H(+) = 3-oxobutanoyl-[ACP] + CO2 + CoA</text>
        <dbReference type="Rhea" id="RHEA:12080"/>
        <dbReference type="Rhea" id="RHEA-COMP:9623"/>
        <dbReference type="Rhea" id="RHEA-COMP:9625"/>
        <dbReference type="ChEBI" id="CHEBI:15378"/>
        <dbReference type="ChEBI" id="CHEBI:16526"/>
        <dbReference type="ChEBI" id="CHEBI:57287"/>
        <dbReference type="ChEBI" id="CHEBI:57288"/>
        <dbReference type="ChEBI" id="CHEBI:78449"/>
        <dbReference type="ChEBI" id="CHEBI:78450"/>
        <dbReference type="EC" id="2.3.1.180"/>
    </reaction>
</comment>
<comment type="pathway">
    <text evidence="1">Lipid metabolism; fatty acid biosynthesis.</text>
</comment>
<comment type="subunit">
    <text evidence="1">Homodimer.</text>
</comment>
<comment type="subcellular location">
    <subcellularLocation>
        <location evidence="1">Cytoplasm</location>
    </subcellularLocation>
</comment>
<comment type="domain">
    <text evidence="1">The last Arg residue of the ACP-binding site is essential for the weak association between ACP/AcpP and FabH.</text>
</comment>
<comment type="similarity">
    <text evidence="1">Belongs to the thiolase-like superfamily. FabH family.</text>
</comment>
<protein>
    <recommendedName>
        <fullName evidence="1">Beta-ketoacyl-[acyl-carrier-protein] synthase III</fullName>
        <shortName evidence="1">Beta-ketoacyl-ACP synthase III</shortName>
        <shortName evidence="1">KAS III</shortName>
        <ecNumber evidence="1">2.3.1.180</ecNumber>
    </recommendedName>
    <alternativeName>
        <fullName evidence="1">3-oxoacyl-[acyl-carrier-protein] synthase 3</fullName>
    </alternativeName>
    <alternativeName>
        <fullName evidence="1">3-oxoacyl-[acyl-carrier-protein] synthase III</fullName>
    </alternativeName>
</protein>
<name>FABH_SPHAL</name>
<organism>
    <name type="scientific">Sphingopyxis alaskensis (strain DSM 13593 / LMG 18877 / RB2256)</name>
    <name type="common">Sphingomonas alaskensis</name>
    <dbReference type="NCBI Taxonomy" id="317655"/>
    <lineage>
        <taxon>Bacteria</taxon>
        <taxon>Pseudomonadati</taxon>
        <taxon>Pseudomonadota</taxon>
        <taxon>Alphaproteobacteria</taxon>
        <taxon>Sphingomonadales</taxon>
        <taxon>Sphingomonadaceae</taxon>
        <taxon>Sphingopyxis</taxon>
    </lineage>
</organism>
<sequence>MTRRAILKGTGSALPRTRVSNAELAERVDTSDEWIVERTGIRFRHIAEPDETTATLGADAARRALEAAGLQPADIGLIIVATATPDNTFPASATKVQALLGAPDCIAFDVAAVCSGFLYAVSVADAMLRTGAARHALVIGSETFSRILDWNDRTTCVLFGDGAGAVVLSAEDVADDRGVLATRLHAEGRYCDMLYVDGGPSTTGTVGHVRMQGREVFRHAVTNLAAVLGEVMRDVGLSADDIDWVVPHQANKRIIDATAKKLGLPADRVVLTVDQHANTSAASVPLALDLAVRDGRIKRGDLVVLEAMGGGFTWGAAVLRV</sequence>
<dbReference type="EC" id="2.3.1.180" evidence="1"/>
<dbReference type="EMBL" id="CP000356">
    <property type="protein sequence ID" value="ABF53132.1"/>
    <property type="molecule type" value="Genomic_DNA"/>
</dbReference>
<dbReference type="RefSeq" id="WP_011541712.1">
    <property type="nucleotide sequence ID" value="NC_008048.1"/>
</dbReference>
<dbReference type="SMR" id="Q1GT90"/>
<dbReference type="STRING" id="317655.Sala_1418"/>
<dbReference type="KEGG" id="sal:Sala_1418"/>
<dbReference type="eggNOG" id="COG0332">
    <property type="taxonomic scope" value="Bacteria"/>
</dbReference>
<dbReference type="HOGENOM" id="CLU_039592_3_1_5"/>
<dbReference type="OrthoDB" id="9815506at2"/>
<dbReference type="UniPathway" id="UPA00094"/>
<dbReference type="Proteomes" id="UP000006578">
    <property type="component" value="Chromosome"/>
</dbReference>
<dbReference type="GO" id="GO:0005737">
    <property type="term" value="C:cytoplasm"/>
    <property type="evidence" value="ECO:0007669"/>
    <property type="project" value="UniProtKB-SubCell"/>
</dbReference>
<dbReference type="GO" id="GO:0004315">
    <property type="term" value="F:3-oxoacyl-[acyl-carrier-protein] synthase activity"/>
    <property type="evidence" value="ECO:0007669"/>
    <property type="project" value="InterPro"/>
</dbReference>
<dbReference type="GO" id="GO:0033818">
    <property type="term" value="F:beta-ketoacyl-acyl-carrier-protein synthase III activity"/>
    <property type="evidence" value="ECO:0007669"/>
    <property type="project" value="UniProtKB-UniRule"/>
</dbReference>
<dbReference type="GO" id="GO:0006633">
    <property type="term" value="P:fatty acid biosynthetic process"/>
    <property type="evidence" value="ECO:0007669"/>
    <property type="project" value="UniProtKB-UniRule"/>
</dbReference>
<dbReference type="GO" id="GO:0044550">
    <property type="term" value="P:secondary metabolite biosynthetic process"/>
    <property type="evidence" value="ECO:0007669"/>
    <property type="project" value="TreeGrafter"/>
</dbReference>
<dbReference type="CDD" id="cd00830">
    <property type="entry name" value="KAS_III"/>
    <property type="match status" value="1"/>
</dbReference>
<dbReference type="FunFam" id="3.40.47.10:FF:000004">
    <property type="entry name" value="3-oxoacyl-[acyl-carrier-protein] synthase 3"/>
    <property type="match status" value="1"/>
</dbReference>
<dbReference type="Gene3D" id="3.40.47.10">
    <property type="match status" value="1"/>
</dbReference>
<dbReference type="HAMAP" id="MF_01815">
    <property type="entry name" value="FabH"/>
    <property type="match status" value="1"/>
</dbReference>
<dbReference type="InterPro" id="IPR013747">
    <property type="entry name" value="ACP_syn_III_C"/>
</dbReference>
<dbReference type="InterPro" id="IPR013751">
    <property type="entry name" value="ACP_syn_III_N"/>
</dbReference>
<dbReference type="InterPro" id="IPR004655">
    <property type="entry name" value="FabH"/>
</dbReference>
<dbReference type="InterPro" id="IPR016039">
    <property type="entry name" value="Thiolase-like"/>
</dbReference>
<dbReference type="NCBIfam" id="TIGR00747">
    <property type="entry name" value="fabH"/>
    <property type="match status" value="1"/>
</dbReference>
<dbReference type="NCBIfam" id="NF006829">
    <property type="entry name" value="PRK09352.1"/>
    <property type="match status" value="1"/>
</dbReference>
<dbReference type="PANTHER" id="PTHR34069">
    <property type="entry name" value="3-OXOACYL-[ACYL-CARRIER-PROTEIN] SYNTHASE 3"/>
    <property type="match status" value="1"/>
</dbReference>
<dbReference type="PANTHER" id="PTHR34069:SF2">
    <property type="entry name" value="BETA-KETOACYL-[ACYL-CARRIER-PROTEIN] SYNTHASE III"/>
    <property type="match status" value="1"/>
</dbReference>
<dbReference type="Pfam" id="PF08545">
    <property type="entry name" value="ACP_syn_III"/>
    <property type="match status" value="1"/>
</dbReference>
<dbReference type="Pfam" id="PF08541">
    <property type="entry name" value="ACP_syn_III_C"/>
    <property type="match status" value="1"/>
</dbReference>
<dbReference type="SUPFAM" id="SSF53901">
    <property type="entry name" value="Thiolase-like"/>
    <property type="match status" value="1"/>
</dbReference>
<keyword id="KW-0012">Acyltransferase</keyword>
<keyword id="KW-0963">Cytoplasm</keyword>
<keyword id="KW-0275">Fatty acid biosynthesis</keyword>
<keyword id="KW-0276">Fatty acid metabolism</keyword>
<keyword id="KW-0444">Lipid biosynthesis</keyword>
<keyword id="KW-0443">Lipid metabolism</keyword>
<keyword id="KW-0511">Multifunctional enzyme</keyword>
<keyword id="KW-1185">Reference proteome</keyword>
<keyword id="KW-0808">Transferase</keyword>
<accession>Q1GT90</accession>
<evidence type="ECO:0000255" key="1">
    <source>
        <dbReference type="HAMAP-Rule" id="MF_01815"/>
    </source>
</evidence>
<feature type="chain" id="PRO_1000056413" description="Beta-ketoacyl-[acyl-carrier-protein] synthase III">
    <location>
        <begin position="1"/>
        <end position="321"/>
    </location>
</feature>
<feature type="region of interest" description="ACP-binding" evidence="1">
    <location>
        <begin position="249"/>
        <end position="253"/>
    </location>
</feature>
<feature type="active site" evidence="1">
    <location>
        <position position="114"/>
    </location>
</feature>
<feature type="active site" evidence="1">
    <location>
        <position position="248"/>
    </location>
</feature>
<feature type="active site" evidence="1">
    <location>
        <position position="278"/>
    </location>
</feature>
<proteinExistence type="inferred from homology"/>
<reference key="1">
    <citation type="journal article" date="2009" name="Proc. Natl. Acad. Sci. U.S.A.">
        <title>The genomic basis of trophic strategy in marine bacteria.</title>
        <authorList>
            <person name="Lauro F.M."/>
            <person name="McDougald D."/>
            <person name="Thomas T."/>
            <person name="Williams T.J."/>
            <person name="Egan S."/>
            <person name="Rice S."/>
            <person name="DeMaere M.Z."/>
            <person name="Ting L."/>
            <person name="Ertan H."/>
            <person name="Johnson J."/>
            <person name="Ferriera S."/>
            <person name="Lapidus A."/>
            <person name="Anderson I."/>
            <person name="Kyrpides N."/>
            <person name="Munk A.C."/>
            <person name="Detter C."/>
            <person name="Han C.S."/>
            <person name="Brown M.V."/>
            <person name="Robb F.T."/>
            <person name="Kjelleberg S."/>
            <person name="Cavicchioli R."/>
        </authorList>
    </citation>
    <scope>NUCLEOTIDE SEQUENCE [LARGE SCALE GENOMIC DNA]</scope>
    <source>
        <strain>DSM 13593 / LMG 18877 / RB2256</strain>
    </source>
</reference>